<comment type="function">
    <text evidence="6 7 8 9">Functions as a guanine nucleotide exchange factor that activates RAC1. May have relatively low activity (PubMed:20702777, PubMed:23375260). Plays a role in the response to class 3 semaphorins and remodeling of the actin cytoskeleton. Plays a role in TNFSF11-mediated osteoclast differentiation, especially in podosome rearrangement and reorganization of the actin cytoskeleton. Regulates the activation of ITGB3, integrin signaling and cell adhesion.</text>
</comment>
<comment type="subunit">
    <text evidence="6 7 9">Interacts with PLXNA1. Interaction with PLXNA1 or PIP5K1C lowers its guanine nucleotide exchange activity. Dissociates from PLXNA1 when SEMA3A binds to the receptor. Interacts with PIP5K1C via its FERM domain. The interaction with PIP5K1C is enhanced by SEMA3A binding. Interacts with RAC1.</text>
</comment>
<comment type="tissue specificity">
    <text evidence="6">Detected in adult brain, lung and testis. Detected in embryonic hippocampus and brain cortex.</text>
</comment>
<comment type="induction">
    <text evidence="8">Up-regulated by TNFSF11.</text>
</comment>
<comment type="domain">
    <text evidence="9">Intramolecular interaction between the DH domain and the PH domains can stabilize the protein in an autoinhibited conformation.</text>
</comment>
<evidence type="ECO:0000250" key="1">
    <source>
        <dbReference type="UniProtKB" id="O94887"/>
    </source>
</evidence>
<evidence type="ECO:0000255" key="2">
    <source>
        <dbReference type="PROSITE-ProRule" id="PRU00062"/>
    </source>
</evidence>
<evidence type="ECO:0000255" key="3">
    <source>
        <dbReference type="PROSITE-ProRule" id="PRU00084"/>
    </source>
</evidence>
<evidence type="ECO:0000255" key="4">
    <source>
        <dbReference type="PROSITE-ProRule" id="PRU00145"/>
    </source>
</evidence>
<evidence type="ECO:0000256" key="5">
    <source>
        <dbReference type="SAM" id="MobiDB-lite"/>
    </source>
</evidence>
<evidence type="ECO:0000269" key="6">
    <source>
    </source>
</evidence>
<evidence type="ECO:0000269" key="7">
    <source>
    </source>
</evidence>
<evidence type="ECO:0000269" key="8">
    <source>
    </source>
</evidence>
<evidence type="ECO:0000269" key="9">
    <source>
    </source>
</evidence>
<evidence type="ECO:0000305" key="10"/>
<evidence type="ECO:0007744" key="11">
    <source>
    </source>
</evidence>
<evidence type="ECO:0007744" key="12">
    <source>
    </source>
</evidence>
<evidence type="ECO:0007829" key="13">
    <source>
        <dbReference type="PDB" id="4GYV"/>
    </source>
</evidence>
<evidence type="ECO:0007829" key="14">
    <source>
        <dbReference type="PDB" id="4GZU"/>
    </source>
</evidence>
<evidence type="ECO:0007829" key="15">
    <source>
        <dbReference type="PDB" id="6D2K"/>
    </source>
</evidence>
<reference key="1">
    <citation type="journal article" date="2005" name="Science">
        <title>The transcriptional landscape of the mammalian genome.</title>
        <authorList>
            <person name="Carninci P."/>
            <person name="Kasukawa T."/>
            <person name="Katayama S."/>
            <person name="Gough J."/>
            <person name="Frith M.C."/>
            <person name="Maeda N."/>
            <person name="Oyama R."/>
            <person name="Ravasi T."/>
            <person name="Lenhard B."/>
            <person name="Wells C."/>
            <person name="Kodzius R."/>
            <person name="Shimokawa K."/>
            <person name="Bajic V.B."/>
            <person name="Brenner S.E."/>
            <person name="Batalov S."/>
            <person name="Forrest A.R."/>
            <person name="Zavolan M."/>
            <person name="Davis M.J."/>
            <person name="Wilming L.G."/>
            <person name="Aidinis V."/>
            <person name="Allen J.E."/>
            <person name="Ambesi-Impiombato A."/>
            <person name="Apweiler R."/>
            <person name="Aturaliya R.N."/>
            <person name="Bailey T.L."/>
            <person name="Bansal M."/>
            <person name="Baxter L."/>
            <person name="Beisel K.W."/>
            <person name="Bersano T."/>
            <person name="Bono H."/>
            <person name="Chalk A.M."/>
            <person name="Chiu K.P."/>
            <person name="Choudhary V."/>
            <person name="Christoffels A."/>
            <person name="Clutterbuck D.R."/>
            <person name="Crowe M.L."/>
            <person name="Dalla E."/>
            <person name="Dalrymple B.P."/>
            <person name="de Bono B."/>
            <person name="Della Gatta G."/>
            <person name="di Bernardo D."/>
            <person name="Down T."/>
            <person name="Engstrom P."/>
            <person name="Fagiolini M."/>
            <person name="Faulkner G."/>
            <person name="Fletcher C.F."/>
            <person name="Fukushima T."/>
            <person name="Furuno M."/>
            <person name="Futaki S."/>
            <person name="Gariboldi M."/>
            <person name="Georgii-Hemming P."/>
            <person name="Gingeras T.R."/>
            <person name="Gojobori T."/>
            <person name="Green R.E."/>
            <person name="Gustincich S."/>
            <person name="Harbers M."/>
            <person name="Hayashi Y."/>
            <person name="Hensch T.K."/>
            <person name="Hirokawa N."/>
            <person name="Hill D."/>
            <person name="Huminiecki L."/>
            <person name="Iacono M."/>
            <person name="Ikeo K."/>
            <person name="Iwama A."/>
            <person name="Ishikawa T."/>
            <person name="Jakt M."/>
            <person name="Kanapin A."/>
            <person name="Katoh M."/>
            <person name="Kawasawa Y."/>
            <person name="Kelso J."/>
            <person name="Kitamura H."/>
            <person name="Kitano H."/>
            <person name="Kollias G."/>
            <person name="Krishnan S.P."/>
            <person name="Kruger A."/>
            <person name="Kummerfeld S.K."/>
            <person name="Kurochkin I.V."/>
            <person name="Lareau L.F."/>
            <person name="Lazarevic D."/>
            <person name="Lipovich L."/>
            <person name="Liu J."/>
            <person name="Liuni S."/>
            <person name="McWilliam S."/>
            <person name="Madan Babu M."/>
            <person name="Madera M."/>
            <person name="Marchionni L."/>
            <person name="Matsuda H."/>
            <person name="Matsuzawa S."/>
            <person name="Miki H."/>
            <person name="Mignone F."/>
            <person name="Miyake S."/>
            <person name="Morris K."/>
            <person name="Mottagui-Tabar S."/>
            <person name="Mulder N."/>
            <person name="Nakano N."/>
            <person name="Nakauchi H."/>
            <person name="Ng P."/>
            <person name="Nilsson R."/>
            <person name="Nishiguchi S."/>
            <person name="Nishikawa S."/>
            <person name="Nori F."/>
            <person name="Ohara O."/>
            <person name="Okazaki Y."/>
            <person name="Orlando V."/>
            <person name="Pang K.C."/>
            <person name="Pavan W.J."/>
            <person name="Pavesi G."/>
            <person name="Pesole G."/>
            <person name="Petrovsky N."/>
            <person name="Piazza S."/>
            <person name="Reed J."/>
            <person name="Reid J.F."/>
            <person name="Ring B.Z."/>
            <person name="Ringwald M."/>
            <person name="Rost B."/>
            <person name="Ruan Y."/>
            <person name="Salzberg S.L."/>
            <person name="Sandelin A."/>
            <person name="Schneider C."/>
            <person name="Schoenbach C."/>
            <person name="Sekiguchi K."/>
            <person name="Semple C.A."/>
            <person name="Seno S."/>
            <person name="Sessa L."/>
            <person name="Sheng Y."/>
            <person name="Shibata Y."/>
            <person name="Shimada H."/>
            <person name="Shimada K."/>
            <person name="Silva D."/>
            <person name="Sinclair B."/>
            <person name="Sperling S."/>
            <person name="Stupka E."/>
            <person name="Sugiura K."/>
            <person name="Sultana R."/>
            <person name="Takenaka Y."/>
            <person name="Taki K."/>
            <person name="Tammoja K."/>
            <person name="Tan S.L."/>
            <person name="Tang S."/>
            <person name="Taylor M.S."/>
            <person name="Tegner J."/>
            <person name="Teichmann S.A."/>
            <person name="Ueda H.R."/>
            <person name="van Nimwegen E."/>
            <person name="Verardo R."/>
            <person name="Wei C.L."/>
            <person name="Yagi K."/>
            <person name="Yamanishi H."/>
            <person name="Zabarovsky E."/>
            <person name="Zhu S."/>
            <person name="Zimmer A."/>
            <person name="Hide W."/>
            <person name="Bult C."/>
            <person name="Grimmond S.M."/>
            <person name="Teasdale R.D."/>
            <person name="Liu E.T."/>
            <person name="Brusic V."/>
            <person name="Quackenbush J."/>
            <person name="Wahlestedt C."/>
            <person name="Mattick J.S."/>
            <person name="Hume D.A."/>
            <person name="Kai C."/>
            <person name="Sasaki D."/>
            <person name="Tomaru Y."/>
            <person name="Fukuda S."/>
            <person name="Kanamori-Katayama M."/>
            <person name="Suzuki M."/>
            <person name="Aoki J."/>
            <person name="Arakawa T."/>
            <person name="Iida J."/>
            <person name="Imamura K."/>
            <person name="Itoh M."/>
            <person name="Kato T."/>
            <person name="Kawaji H."/>
            <person name="Kawagashira N."/>
            <person name="Kawashima T."/>
            <person name="Kojima M."/>
            <person name="Kondo S."/>
            <person name="Konno H."/>
            <person name="Nakano K."/>
            <person name="Ninomiya N."/>
            <person name="Nishio T."/>
            <person name="Okada M."/>
            <person name="Plessy C."/>
            <person name="Shibata K."/>
            <person name="Shiraki T."/>
            <person name="Suzuki S."/>
            <person name="Tagami M."/>
            <person name="Waki K."/>
            <person name="Watahiki A."/>
            <person name="Okamura-Oho Y."/>
            <person name="Suzuki H."/>
            <person name="Kawai J."/>
            <person name="Hayashizaki Y."/>
        </authorList>
    </citation>
    <scope>NUCLEOTIDE SEQUENCE [LARGE SCALE MRNA]</scope>
    <source>
        <strain>NOD</strain>
        <tissue>Spleen</tissue>
    </source>
</reference>
<reference key="2">
    <citation type="journal article" date="2009" name="PLoS Biol.">
        <title>Lineage-specific biology revealed by a finished genome assembly of the mouse.</title>
        <authorList>
            <person name="Church D.M."/>
            <person name="Goodstadt L."/>
            <person name="Hillier L.W."/>
            <person name="Zody M.C."/>
            <person name="Goldstein S."/>
            <person name="She X."/>
            <person name="Bult C.J."/>
            <person name="Agarwala R."/>
            <person name="Cherry J.L."/>
            <person name="DiCuccio M."/>
            <person name="Hlavina W."/>
            <person name="Kapustin Y."/>
            <person name="Meric P."/>
            <person name="Maglott D."/>
            <person name="Birtle Z."/>
            <person name="Marques A.C."/>
            <person name="Graves T."/>
            <person name="Zhou S."/>
            <person name="Teague B."/>
            <person name="Potamousis K."/>
            <person name="Churas C."/>
            <person name="Place M."/>
            <person name="Herschleb J."/>
            <person name="Runnheim R."/>
            <person name="Forrest D."/>
            <person name="Amos-Landgraf J."/>
            <person name="Schwartz D.C."/>
            <person name="Cheng Z."/>
            <person name="Lindblad-Toh K."/>
            <person name="Eichler E.E."/>
            <person name="Ponting C.P."/>
        </authorList>
    </citation>
    <scope>NUCLEOTIDE SEQUENCE [LARGE SCALE GENOMIC DNA]</scope>
    <source>
        <strain>C57BL/6J</strain>
    </source>
</reference>
<reference key="3">
    <citation type="journal article" date="2004" name="Genome Res.">
        <title>The status, quality, and expansion of the NIH full-length cDNA project: the Mammalian Gene Collection (MGC).</title>
        <authorList>
            <consortium name="The MGC Project Team"/>
        </authorList>
    </citation>
    <scope>NUCLEOTIDE SEQUENCE [LARGE SCALE MRNA]</scope>
    <source>
        <strain>FVB/N-3</strain>
        <tissue>Mammary tumor</tissue>
    </source>
</reference>
<reference key="4">
    <citation type="journal article" date="2004" name="DNA Res.">
        <title>Prediction of the coding sequences of mouse homologues of KIAA gene: IV. The complete nucleotide sequences of 500 mouse KIAA-homologous cDNAs identified by screening of terminal sequences of cDNA clones randomly sampled from size-fractionated libraries.</title>
        <authorList>
            <person name="Okazaki N."/>
            <person name="Kikuno R."/>
            <person name="Ohara R."/>
            <person name="Inamoto S."/>
            <person name="Koseki H."/>
            <person name="Hiraoka S."/>
            <person name="Saga Y."/>
            <person name="Seino S."/>
            <person name="Nishimura M."/>
            <person name="Kaisho T."/>
            <person name="Hoshino K."/>
            <person name="Kitamura H."/>
            <person name="Nagase T."/>
            <person name="Ohara O."/>
            <person name="Koga H."/>
        </authorList>
    </citation>
    <scope>NUCLEOTIDE SEQUENCE [LARGE SCALE MRNA] OF 880-1065</scope>
    <source>
        <tissue>Pancreatic islet</tissue>
    </source>
</reference>
<reference key="5">
    <citation type="journal article" date="2002" name="J. Neurosci.">
        <title>A novel FERM domain including guanine nucleotide exchange factor is involved in Rac signaling and regulates neurite remodeling.</title>
        <authorList>
            <person name="Kubo T."/>
            <person name="Yamashita T."/>
            <person name="Yamaguchi A."/>
            <person name="Sumimoto H."/>
            <person name="Hosokawa K."/>
            <person name="Tohyama M."/>
        </authorList>
    </citation>
    <scope>FUNCTION</scope>
    <scope>INTERACTION WITH RAC1</scope>
    <scope>TISSUE SPECIFICITY</scope>
</reference>
<reference key="6">
    <citation type="journal article" date="2005" name="Nat. Neurosci.">
        <title>FARP2 triggers signals for Sema3A-mediated axonal repulsion.</title>
        <authorList>
            <person name="Toyofuku T."/>
            <person name="Yoshida J."/>
            <person name="Sugimoto T."/>
            <person name="Zhang H."/>
            <person name="Kumanogoh A."/>
            <person name="Hori M."/>
            <person name="Kikutani H."/>
        </authorList>
    </citation>
    <scope>FUNCTION</scope>
    <scope>INTERACTION WITH PLXNA1 AND PIP5K1C</scope>
</reference>
<reference key="7">
    <citation type="journal article" date="2007" name="Proc. Natl. Acad. Sci. U.S.A.">
        <title>Large-scale phosphorylation analysis of mouse liver.</title>
        <authorList>
            <person name="Villen J."/>
            <person name="Beausoleil S.A."/>
            <person name="Gerber S.A."/>
            <person name="Gygi S.P."/>
        </authorList>
    </citation>
    <scope>PHOSPHORYLATION [LARGE SCALE ANALYSIS] AT SER-863</scope>
    <scope>IDENTIFICATION BY MASS SPECTROMETRY [LARGE SCALE ANALYSIS]</scope>
    <source>
        <tissue>Liver</tissue>
    </source>
</reference>
<reference key="8">
    <citation type="journal article" date="2010" name="Cell">
        <title>A tissue-specific atlas of mouse protein phosphorylation and expression.</title>
        <authorList>
            <person name="Huttlin E.L."/>
            <person name="Jedrychowski M.P."/>
            <person name="Elias J.E."/>
            <person name="Goswami T."/>
            <person name="Rad R."/>
            <person name="Beausoleil S.A."/>
            <person name="Villen J."/>
            <person name="Haas W."/>
            <person name="Sowa M.E."/>
            <person name="Gygi S.P."/>
        </authorList>
    </citation>
    <scope>PHOSPHORYLATION [LARGE SCALE ANALYSIS] AT SER-863 AND SER-880</scope>
    <scope>IDENTIFICATION BY MASS SPECTROMETRY [LARGE SCALE ANALYSIS]</scope>
    <source>
        <tissue>Heart</tissue>
        <tissue>Kidney</tissue>
        <tissue>Liver</tissue>
        <tissue>Lung</tissue>
        <tissue>Pancreas</tissue>
    </source>
</reference>
<reference key="9">
    <citation type="journal article" date="2010" name="FASEB J.">
        <title>Integral roles of a guanine nucleotide exchange factor, FARP2, in osteoclast podosome rearrangements.</title>
        <authorList>
            <person name="Takegahara N."/>
            <person name="Kang S."/>
            <person name="Nojima S."/>
            <person name="Takamatsu H."/>
            <person name="Okuno T."/>
            <person name="Kikutani H."/>
            <person name="Toyofuku T."/>
            <person name="Kumanogoh A."/>
        </authorList>
    </citation>
    <scope>FUNCTION</scope>
    <scope>INDUCTION</scope>
</reference>
<reference key="10">
    <citation type="journal article" date="2013" name="Structure">
        <title>Structural basis for autoinhibition of the guanine nucleotide exchange factor FARP2.</title>
        <authorList>
            <person name="He X."/>
            <person name="Kuo Y.C."/>
            <person name="Rosche T.J."/>
            <person name="Zhang X."/>
        </authorList>
    </citation>
    <scope>X-RAY CRYSTALLOGRAPHY (2.9 ANGSTROMS) OF 536-749</scope>
    <scope>FUNCTION</scope>
    <scope>MUTAGENESIS OF LEU-730 AND LEU-733</scope>
    <scope>INTERACTION WITH RAC1</scope>
    <scope>DOMAIN</scope>
</reference>
<accession>Q91VS8</accession>
<accession>E9QJS4</accession>
<accession>Q3TAP2</accession>
<accession>Q69ZZ0</accession>
<keyword id="KW-0002">3D-structure</keyword>
<keyword id="KW-0344">Guanine-nucleotide releasing factor</keyword>
<keyword id="KW-0597">Phosphoprotein</keyword>
<keyword id="KW-1185">Reference proteome</keyword>
<keyword id="KW-0677">Repeat</keyword>
<sequence>MGEIEGTYRALPTSGTRLGGQTAIGVSTLEPEQSLSPRMQEKHMRIRVKLLDSTVELFDIEPKCDGQVLLTQVWKHLNLIECDYFGLEFKNVQSYWIWLEPMKPIIRQVRKPKNAVLRLAVKFFPPDPGQLQEEYTRYLFALQLKRDLLEERLTCTANTAALLISHLLQSEIGDYDETLDREHLKANEYLPNQEKSLEKILDFHQRHTGQTPAESDFQVLEIARKLEMYGIRFHMASDREGTKINLAVSHMGVLVFQGTTKINTFNWSKVRKLSFKRKRFLIKLHPEVHGPYQDTLEFLLGSRDECKNFWKICVEYHTFFRLSDQPKPKAKAVFFSRGSSFRYSGRTQKQLVDYVKDGGMKRIPYERRHSKTRTSLHALTVDLPKQSVSFTDGLRTSASLSSANVSFYPPPSSSLSPPGLPNLKDSSSSLVDPQAPVIKSTAAERSSGPSSSDGPSTQSAHLPGPPVLRPGPGFSMDSPQPSPSSLKSHLSLCPELQAALSTAEQGASPVLSPVLSGAGTARMDNQEEQKHKHMPEDEAYFIAKEILATERTYLKDLEVITVWFRSVLIKEEAMPAALMALLFSNIDPVYEFHRGFLHEVEQRLALWEGPSSAHLKGDHQRIGDILLRNMRQLKEFTSYFQRHDEVLTELEKATKHCKKLEAVYKEFELQKVCYLPLNTFLLKPVQRLVHYRLLLSRLCAHYSPGHRDYADCHEALKAITEVTTELQQSLTRLENLQKLTELQRDLVGVENLIAPGREFIREGCLHKLTKKGLQQRMFFLFSDMLLYTSKSVTGASHFRIRGFLPLRGMLVEESENEWSVPHCFTIYAAQKTIVVAASTRLEKEKWMQDLNAAIQAAKTIGDSPPVLLGGPVYTRTPRSSDEVSLEESEDGRGNRGSLEGNSQHRANTTMHVCWYRNTSVSRADHSAAVENQLSGYLLRKFKNSNGWQKLWVVFTNFCLFFYKTHQDDYPLASLPLLGYSVSLPREADSIHKDYVFKLQFKSHVYFFRAESKYTFERWMDVIKRASSSPGRPPSFTQDCSHHSPGLEAEIREKEACPSPCLDKNL</sequence>
<proteinExistence type="evidence at protein level"/>
<name>FARP2_MOUSE</name>
<organism>
    <name type="scientific">Mus musculus</name>
    <name type="common">Mouse</name>
    <dbReference type="NCBI Taxonomy" id="10090"/>
    <lineage>
        <taxon>Eukaryota</taxon>
        <taxon>Metazoa</taxon>
        <taxon>Chordata</taxon>
        <taxon>Craniata</taxon>
        <taxon>Vertebrata</taxon>
        <taxon>Euteleostomi</taxon>
        <taxon>Mammalia</taxon>
        <taxon>Eutheria</taxon>
        <taxon>Euarchontoglires</taxon>
        <taxon>Glires</taxon>
        <taxon>Rodentia</taxon>
        <taxon>Myomorpha</taxon>
        <taxon>Muroidea</taxon>
        <taxon>Muridae</taxon>
        <taxon>Murinae</taxon>
        <taxon>Mus</taxon>
        <taxon>Mus</taxon>
    </lineage>
</organism>
<dbReference type="EMBL" id="AK171713">
    <property type="protein sequence ID" value="BAE42626.1"/>
    <property type="molecule type" value="mRNA"/>
</dbReference>
<dbReference type="EMBL" id="AC108412">
    <property type="status" value="NOT_ANNOTATED_CDS"/>
    <property type="molecule type" value="Genomic_DNA"/>
</dbReference>
<dbReference type="EMBL" id="AC131316">
    <property type="status" value="NOT_ANNOTATED_CDS"/>
    <property type="molecule type" value="Genomic_DNA"/>
</dbReference>
<dbReference type="EMBL" id="BC009153">
    <property type="protein sequence ID" value="AAH09153.1"/>
    <property type="molecule type" value="mRNA"/>
</dbReference>
<dbReference type="EMBL" id="AK173028">
    <property type="protein sequence ID" value="BAD32306.1"/>
    <property type="molecule type" value="mRNA"/>
</dbReference>
<dbReference type="CCDS" id="CCDS15191.1"/>
<dbReference type="RefSeq" id="NP_663494.2">
    <property type="nucleotide sequence ID" value="NM_145519.2"/>
</dbReference>
<dbReference type="PDB" id="4GYV">
    <property type="method" value="X-ray"/>
    <property type="resolution" value="2.90 A"/>
    <property type="chains" value="A/B/C/D/E/F/G/H/I=536-749"/>
</dbReference>
<dbReference type="PDB" id="4GZU">
    <property type="method" value="X-ray"/>
    <property type="resolution" value="3.20 A"/>
    <property type="chains" value="A/B=536-1032"/>
</dbReference>
<dbReference type="PDB" id="6D2K">
    <property type="method" value="X-ray"/>
    <property type="resolution" value="1.55 A"/>
    <property type="chains" value="A=38-324"/>
</dbReference>
<dbReference type="PDBsum" id="4GYV"/>
<dbReference type="PDBsum" id="4GZU"/>
<dbReference type="PDBsum" id="6D2K"/>
<dbReference type="SMR" id="Q91VS8"/>
<dbReference type="BioGRID" id="230620">
    <property type="interactions" value="10"/>
</dbReference>
<dbReference type="FunCoup" id="Q91VS8">
    <property type="interactions" value="1137"/>
</dbReference>
<dbReference type="IntAct" id="Q91VS8">
    <property type="interactions" value="2"/>
</dbReference>
<dbReference type="MINT" id="Q91VS8"/>
<dbReference type="STRING" id="10090.ENSMUSP00000112725"/>
<dbReference type="GlyGen" id="Q91VS8">
    <property type="glycosylation" value="2 sites, 1 N-linked glycan (1 site), 1 O-linked glycan (1 site)"/>
</dbReference>
<dbReference type="iPTMnet" id="Q91VS8"/>
<dbReference type="PhosphoSitePlus" id="Q91VS8"/>
<dbReference type="jPOST" id="Q91VS8"/>
<dbReference type="PaxDb" id="10090-ENSMUSP00000112725"/>
<dbReference type="PeptideAtlas" id="Q91VS8"/>
<dbReference type="ProteomicsDB" id="267572"/>
<dbReference type="Pumba" id="Q91VS8"/>
<dbReference type="Antibodypedia" id="34561">
    <property type="antibodies" value="149 antibodies from 23 providers"/>
</dbReference>
<dbReference type="DNASU" id="227377"/>
<dbReference type="Ensembl" id="ENSMUST00000120301.8">
    <property type="protein sequence ID" value="ENSMUSP00000112725.2"/>
    <property type="gene ID" value="ENSMUSG00000034066.14"/>
</dbReference>
<dbReference type="GeneID" id="227377"/>
<dbReference type="KEGG" id="mmu:227377"/>
<dbReference type="UCSC" id="uc007cec.2">
    <property type="organism name" value="mouse"/>
</dbReference>
<dbReference type="AGR" id="MGI:2385126"/>
<dbReference type="CTD" id="9855"/>
<dbReference type="MGI" id="MGI:2385126">
    <property type="gene designation" value="Farp2"/>
</dbReference>
<dbReference type="VEuPathDB" id="HostDB:ENSMUSG00000034066"/>
<dbReference type="eggNOG" id="KOG3531">
    <property type="taxonomic scope" value="Eukaryota"/>
</dbReference>
<dbReference type="GeneTree" id="ENSGT00940000158642"/>
<dbReference type="HOGENOM" id="CLU_012301_0_0_1"/>
<dbReference type="InParanoid" id="Q91VS8"/>
<dbReference type="OMA" id="HKHMPED"/>
<dbReference type="OrthoDB" id="9990815at2759"/>
<dbReference type="PhylomeDB" id="Q91VS8"/>
<dbReference type="TreeFam" id="TF351276"/>
<dbReference type="Reactome" id="R-MMU-399955">
    <property type="pathway name" value="SEMA3A-Plexin repulsion signaling by inhibiting Integrin adhesion"/>
</dbReference>
<dbReference type="Reactome" id="R-MMU-9013149">
    <property type="pathway name" value="RAC1 GTPase cycle"/>
</dbReference>
<dbReference type="BioGRID-ORCS" id="227377">
    <property type="hits" value="3 hits in 77 CRISPR screens"/>
</dbReference>
<dbReference type="ChiTaRS" id="Farp2">
    <property type="organism name" value="mouse"/>
</dbReference>
<dbReference type="EvolutionaryTrace" id="Q91VS8"/>
<dbReference type="PRO" id="PR:Q91VS8"/>
<dbReference type="Proteomes" id="UP000000589">
    <property type="component" value="Chromosome 1"/>
</dbReference>
<dbReference type="RNAct" id="Q91VS8">
    <property type="molecule type" value="protein"/>
</dbReference>
<dbReference type="Bgee" id="ENSMUSG00000034066">
    <property type="expression patterns" value="Expressed in bone fossa and 221 other cell types or tissues"/>
</dbReference>
<dbReference type="ExpressionAtlas" id="Q91VS8">
    <property type="expression patterns" value="baseline and differential"/>
</dbReference>
<dbReference type="GO" id="GO:0005737">
    <property type="term" value="C:cytoplasm"/>
    <property type="evidence" value="ECO:0000266"/>
    <property type="project" value="MGI"/>
</dbReference>
<dbReference type="GO" id="GO:0005856">
    <property type="term" value="C:cytoskeleton"/>
    <property type="evidence" value="ECO:0007669"/>
    <property type="project" value="InterPro"/>
</dbReference>
<dbReference type="GO" id="GO:0005829">
    <property type="term" value="C:cytosol"/>
    <property type="evidence" value="ECO:0000304"/>
    <property type="project" value="Reactome"/>
</dbReference>
<dbReference type="GO" id="GO:0008092">
    <property type="term" value="F:cytoskeletal protein binding"/>
    <property type="evidence" value="ECO:0007669"/>
    <property type="project" value="InterPro"/>
</dbReference>
<dbReference type="GO" id="GO:0005085">
    <property type="term" value="F:guanyl-nucleotide exchange factor activity"/>
    <property type="evidence" value="ECO:0000314"/>
    <property type="project" value="UniProtKB"/>
</dbReference>
<dbReference type="GO" id="GO:0030036">
    <property type="term" value="P:actin cytoskeleton organization"/>
    <property type="evidence" value="ECO:0000315"/>
    <property type="project" value="UniProtKB"/>
</dbReference>
<dbReference type="GO" id="GO:0007155">
    <property type="term" value="P:cell adhesion"/>
    <property type="evidence" value="ECO:0000315"/>
    <property type="project" value="UniProtKB"/>
</dbReference>
<dbReference type="GO" id="GO:0022405">
    <property type="term" value="P:hair cycle process"/>
    <property type="evidence" value="ECO:0000315"/>
    <property type="project" value="MGI"/>
</dbReference>
<dbReference type="GO" id="GO:0016322">
    <property type="term" value="P:neuron remodeling"/>
    <property type="evidence" value="ECO:0000266"/>
    <property type="project" value="MGI"/>
</dbReference>
<dbReference type="GO" id="GO:0030316">
    <property type="term" value="P:osteoclast differentiation"/>
    <property type="evidence" value="ECO:0000315"/>
    <property type="project" value="UniProtKB"/>
</dbReference>
<dbReference type="GO" id="GO:0071800">
    <property type="term" value="P:podosome assembly"/>
    <property type="evidence" value="ECO:0000315"/>
    <property type="project" value="UniProtKB"/>
</dbReference>
<dbReference type="GO" id="GO:0016601">
    <property type="term" value="P:Rac protein signal transduction"/>
    <property type="evidence" value="ECO:0000266"/>
    <property type="project" value="MGI"/>
</dbReference>
<dbReference type="GO" id="GO:0033623">
    <property type="term" value="P:regulation of integrin activation"/>
    <property type="evidence" value="ECO:0000315"/>
    <property type="project" value="UniProtKB"/>
</dbReference>
<dbReference type="GO" id="GO:0071526">
    <property type="term" value="P:semaphorin-plexin signaling pathway"/>
    <property type="evidence" value="ECO:0000315"/>
    <property type="project" value="UniProtKB"/>
</dbReference>
<dbReference type="CDD" id="cd14473">
    <property type="entry name" value="FERM_B-lobe"/>
    <property type="match status" value="1"/>
</dbReference>
<dbReference type="CDD" id="cd13193">
    <property type="entry name" value="FERM_C_FARP1-like"/>
    <property type="match status" value="1"/>
</dbReference>
<dbReference type="CDD" id="cd17190">
    <property type="entry name" value="FERM_F1_FARP2"/>
    <property type="match status" value="1"/>
</dbReference>
<dbReference type="CDD" id="cd01220">
    <property type="entry name" value="PH1_FARP1-like"/>
    <property type="match status" value="1"/>
</dbReference>
<dbReference type="CDD" id="cd13235">
    <property type="entry name" value="PH2_FARP1-like"/>
    <property type="match status" value="1"/>
</dbReference>
<dbReference type="CDD" id="cd00160">
    <property type="entry name" value="RhoGEF"/>
    <property type="match status" value="1"/>
</dbReference>
<dbReference type="DisProt" id="DP02896"/>
<dbReference type="FunFam" id="2.30.29.30:FF:000002">
    <property type="entry name" value="Band 4.1-like protein 5 isoform 1"/>
    <property type="match status" value="1"/>
</dbReference>
<dbReference type="FunFam" id="3.10.20.90:FF:000040">
    <property type="entry name" value="FERM, RhoGEF and pleckstrin domain-containing protein"/>
    <property type="match status" value="1"/>
</dbReference>
<dbReference type="FunFam" id="1.20.80.10:FF:000005">
    <property type="entry name" value="FERM, RhoGEF and pleckstrin domain-containing protein 1"/>
    <property type="match status" value="1"/>
</dbReference>
<dbReference type="FunFam" id="2.30.29.30:FF:000046">
    <property type="entry name" value="FERM, RhoGEF and pleckstrin domain-containing protein 1"/>
    <property type="match status" value="1"/>
</dbReference>
<dbReference type="FunFam" id="1.20.900.10:FF:000020">
    <property type="entry name" value="FERM, RhoGEF and pleckstrin domain-containing protein 2"/>
    <property type="match status" value="1"/>
</dbReference>
<dbReference type="Gene3D" id="1.20.80.10">
    <property type="match status" value="1"/>
</dbReference>
<dbReference type="Gene3D" id="1.20.900.10">
    <property type="entry name" value="Dbl homology (DH) domain"/>
    <property type="match status" value="1"/>
</dbReference>
<dbReference type="Gene3D" id="3.10.20.90">
    <property type="entry name" value="Phosphatidylinositol 3-kinase Catalytic Subunit, Chain A, domain 1"/>
    <property type="match status" value="1"/>
</dbReference>
<dbReference type="Gene3D" id="2.30.29.30">
    <property type="entry name" value="Pleckstrin-homology domain (PH domain)/Phosphotyrosine-binding domain (PTB)"/>
    <property type="match status" value="3"/>
</dbReference>
<dbReference type="InterPro" id="IPR019749">
    <property type="entry name" value="Band_41_domain"/>
</dbReference>
<dbReference type="InterPro" id="IPR035899">
    <property type="entry name" value="DBL_dom_sf"/>
</dbReference>
<dbReference type="InterPro" id="IPR000219">
    <property type="entry name" value="DH_dom"/>
</dbReference>
<dbReference type="InterPro" id="IPR000798">
    <property type="entry name" value="Ez/rad/moesin-like"/>
</dbReference>
<dbReference type="InterPro" id="IPR014847">
    <property type="entry name" value="FA"/>
</dbReference>
<dbReference type="InterPro" id="IPR041788">
    <property type="entry name" value="FARP1/FARP2/FRMD7_FERM_C"/>
</dbReference>
<dbReference type="InterPro" id="IPR014352">
    <property type="entry name" value="FERM/acyl-CoA-bd_prot_sf"/>
</dbReference>
<dbReference type="InterPro" id="IPR035963">
    <property type="entry name" value="FERM_2"/>
</dbReference>
<dbReference type="InterPro" id="IPR019748">
    <property type="entry name" value="FERM_central"/>
</dbReference>
<dbReference type="InterPro" id="IPR019747">
    <property type="entry name" value="FERM_CS"/>
</dbReference>
<dbReference type="InterPro" id="IPR000299">
    <property type="entry name" value="FERM_domain"/>
</dbReference>
<dbReference type="InterPro" id="IPR018979">
    <property type="entry name" value="FERM_N"/>
</dbReference>
<dbReference type="InterPro" id="IPR018980">
    <property type="entry name" value="FERM_PH-like_C"/>
</dbReference>
<dbReference type="InterPro" id="IPR011993">
    <property type="entry name" value="PH-like_dom_sf"/>
</dbReference>
<dbReference type="InterPro" id="IPR001849">
    <property type="entry name" value="PH_domain"/>
</dbReference>
<dbReference type="InterPro" id="IPR051835">
    <property type="entry name" value="RAC1-GEF"/>
</dbReference>
<dbReference type="InterPro" id="IPR029071">
    <property type="entry name" value="Ubiquitin-like_domsf"/>
</dbReference>
<dbReference type="PANTHER" id="PTHR45858">
    <property type="entry name" value="FERM DOMAIN CONTAINING PROTEIN"/>
    <property type="match status" value="1"/>
</dbReference>
<dbReference type="PANTHER" id="PTHR45858:SF4">
    <property type="entry name" value="FERM, ARHGEF AND PLECKSTRIN DOMAIN-CONTAINING PROTEIN 2"/>
    <property type="match status" value="1"/>
</dbReference>
<dbReference type="Pfam" id="PF08736">
    <property type="entry name" value="FA"/>
    <property type="match status" value="1"/>
</dbReference>
<dbReference type="Pfam" id="PF09380">
    <property type="entry name" value="FERM_C"/>
    <property type="match status" value="1"/>
</dbReference>
<dbReference type="Pfam" id="PF00373">
    <property type="entry name" value="FERM_M"/>
    <property type="match status" value="1"/>
</dbReference>
<dbReference type="Pfam" id="PF09379">
    <property type="entry name" value="FERM_N"/>
    <property type="match status" value="1"/>
</dbReference>
<dbReference type="Pfam" id="PF00169">
    <property type="entry name" value="PH"/>
    <property type="match status" value="2"/>
</dbReference>
<dbReference type="Pfam" id="PF00621">
    <property type="entry name" value="RhoGEF"/>
    <property type="match status" value="1"/>
</dbReference>
<dbReference type="PRINTS" id="PR00935">
    <property type="entry name" value="BAND41"/>
</dbReference>
<dbReference type="PRINTS" id="PR00661">
    <property type="entry name" value="ERMFAMILY"/>
</dbReference>
<dbReference type="SMART" id="SM00295">
    <property type="entry name" value="B41"/>
    <property type="match status" value="1"/>
</dbReference>
<dbReference type="SMART" id="SM01195">
    <property type="entry name" value="FA"/>
    <property type="match status" value="1"/>
</dbReference>
<dbReference type="SMART" id="SM01196">
    <property type="entry name" value="FERM_C"/>
    <property type="match status" value="1"/>
</dbReference>
<dbReference type="SMART" id="SM00233">
    <property type="entry name" value="PH"/>
    <property type="match status" value="2"/>
</dbReference>
<dbReference type="SMART" id="SM00325">
    <property type="entry name" value="RhoGEF"/>
    <property type="match status" value="1"/>
</dbReference>
<dbReference type="SUPFAM" id="SSF48065">
    <property type="entry name" value="DBL homology domain (DH-domain)"/>
    <property type="match status" value="1"/>
</dbReference>
<dbReference type="SUPFAM" id="SSF50729">
    <property type="entry name" value="PH domain-like"/>
    <property type="match status" value="3"/>
</dbReference>
<dbReference type="SUPFAM" id="SSF47031">
    <property type="entry name" value="Second domain of FERM"/>
    <property type="match status" value="1"/>
</dbReference>
<dbReference type="SUPFAM" id="SSF54236">
    <property type="entry name" value="Ubiquitin-like"/>
    <property type="match status" value="1"/>
</dbReference>
<dbReference type="PROSITE" id="PS50010">
    <property type="entry name" value="DH_2"/>
    <property type="match status" value="1"/>
</dbReference>
<dbReference type="PROSITE" id="PS00660">
    <property type="entry name" value="FERM_1"/>
    <property type="match status" value="1"/>
</dbReference>
<dbReference type="PROSITE" id="PS50057">
    <property type="entry name" value="FERM_3"/>
    <property type="match status" value="1"/>
</dbReference>
<dbReference type="PROSITE" id="PS50003">
    <property type="entry name" value="PH_DOMAIN"/>
    <property type="match status" value="2"/>
</dbReference>
<protein>
    <recommendedName>
        <fullName>FERM, ARHGEF and pleckstrin domain-containing protein 2</fullName>
    </recommendedName>
    <alternativeName>
        <fullName>FERM domain including RhoGEF</fullName>
        <shortName>FIR</shortName>
    </alternativeName>
    <alternativeName>
        <fullName>FERM, RhoGEF and pleckstrin domain-containing protein 2</fullName>
    </alternativeName>
</protein>
<gene>
    <name type="primary">Farp2</name>
    <name type="synonym">Kiaa0793</name>
</gene>
<feature type="chain" id="PRO_0000232756" description="FERM, ARHGEF and pleckstrin domain-containing protein 2">
    <location>
        <begin position="1"/>
        <end position="1065"/>
    </location>
</feature>
<feature type="domain" description="FERM" evidence="3">
    <location>
        <begin position="44"/>
        <end position="324"/>
    </location>
</feature>
<feature type="domain" description="DH" evidence="2">
    <location>
        <begin position="538"/>
        <end position="729"/>
    </location>
</feature>
<feature type="domain" description="PH 1" evidence="4">
    <location>
        <begin position="758"/>
        <end position="855"/>
    </location>
</feature>
<feature type="domain" description="PH 2" evidence="4">
    <location>
        <begin position="930"/>
        <end position="1027"/>
    </location>
</feature>
<feature type="region of interest" description="Disordered" evidence="5">
    <location>
        <begin position="406"/>
        <end position="489"/>
    </location>
</feature>
<feature type="region of interest" description="Disordered" evidence="5">
    <location>
        <begin position="504"/>
        <end position="534"/>
    </location>
</feature>
<feature type="region of interest" description="Disordered" evidence="5">
    <location>
        <begin position="874"/>
        <end position="902"/>
    </location>
</feature>
<feature type="compositionally biased region" description="Low complexity" evidence="5">
    <location>
        <begin position="440"/>
        <end position="459"/>
    </location>
</feature>
<feature type="compositionally biased region" description="Basic and acidic residues" evidence="5">
    <location>
        <begin position="524"/>
        <end position="534"/>
    </location>
</feature>
<feature type="modified residue" description="Phosphoserine" evidence="1">
    <location>
        <position position="389"/>
    </location>
</feature>
<feature type="modified residue" description="Phosphoserine" evidence="1">
    <location>
        <position position="440"/>
    </location>
</feature>
<feature type="modified residue" description="Phosphoserine" evidence="11 12">
    <location>
        <position position="863"/>
    </location>
</feature>
<feature type="modified residue" description="Phosphoserine" evidence="12">
    <location>
        <position position="880"/>
    </location>
</feature>
<feature type="mutagenesis site" description="Increases guanyl-nucleotide exchange factor activity with RAC1; when associated with Q-733." evidence="9">
    <original>L</original>
    <variation>R</variation>
    <location>
        <position position="730"/>
    </location>
</feature>
<feature type="mutagenesis site" description="Increases guanyl-nucleotide exchange factor activity with RAC1; when associated with R-730." evidence="9">
    <original>L</original>
    <variation>Q</variation>
    <location>
        <position position="733"/>
    </location>
</feature>
<feature type="sequence conflict" description="In Ref. 1; BAE42626." evidence="10" ref="1">
    <original>H</original>
    <variation>R</variation>
    <location>
        <position position="234"/>
    </location>
</feature>
<feature type="sequence conflict" description="In Ref. 1; BAE42626 and 3; AAH09153." evidence="10" ref="1 3">
    <original>P</original>
    <variation>L</variation>
    <location>
        <position position="821"/>
    </location>
</feature>
<feature type="sequence conflict" description="In Ref. 4; BAD32306." evidence="10" ref="4">
    <original>M</original>
    <variation>I</variation>
    <location>
        <position position="1019"/>
    </location>
</feature>
<feature type="strand" evidence="15">
    <location>
        <begin position="44"/>
        <end position="49"/>
    </location>
</feature>
<feature type="strand" evidence="15">
    <location>
        <begin position="55"/>
        <end position="60"/>
    </location>
</feature>
<feature type="helix" evidence="15">
    <location>
        <begin position="66"/>
        <end position="77"/>
    </location>
</feature>
<feature type="helix" evidence="15">
    <location>
        <begin position="82"/>
        <end position="84"/>
    </location>
</feature>
<feature type="strand" evidence="15">
    <location>
        <begin position="85"/>
        <end position="90"/>
    </location>
</feature>
<feature type="strand" evidence="15">
    <location>
        <begin position="96"/>
        <end position="98"/>
    </location>
</feature>
<feature type="helix" evidence="15">
    <location>
        <begin position="105"/>
        <end position="109"/>
    </location>
</feature>
<feature type="strand" evidence="15">
    <location>
        <begin position="115"/>
        <end position="121"/>
    </location>
</feature>
<feature type="helix" evidence="15">
    <location>
        <begin position="128"/>
        <end position="130"/>
    </location>
</feature>
<feature type="helix" evidence="15">
    <location>
        <begin position="134"/>
        <end position="149"/>
    </location>
</feature>
<feature type="helix" evidence="15">
    <location>
        <begin position="157"/>
        <end position="172"/>
    </location>
</feature>
<feature type="helix" evidence="15">
    <location>
        <begin position="177"/>
        <end position="186"/>
    </location>
</feature>
<feature type="helix" evidence="15">
    <location>
        <begin position="193"/>
        <end position="196"/>
    </location>
</feature>
<feature type="helix" evidence="15">
    <location>
        <begin position="197"/>
        <end position="204"/>
    </location>
</feature>
<feature type="helix" evidence="15">
    <location>
        <begin position="205"/>
        <end position="207"/>
    </location>
</feature>
<feature type="helix" evidence="15">
    <location>
        <begin position="212"/>
        <end position="223"/>
    </location>
</feature>
<feature type="turn" evidence="15">
    <location>
        <begin position="227"/>
        <end position="230"/>
    </location>
</feature>
<feature type="strand" evidence="15">
    <location>
        <begin position="234"/>
        <end position="237"/>
    </location>
</feature>
<feature type="strand" evidence="15">
    <location>
        <begin position="243"/>
        <end position="249"/>
    </location>
</feature>
<feature type="strand" evidence="15">
    <location>
        <begin position="252"/>
        <end position="257"/>
    </location>
</feature>
<feature type="strand" evidence="15">
    <location>
        <begin position="260"/>
        <end position="266"/>
    </location>
</feature>
<feature type="helix" evidence="15">
    <location>
        <begin position="267"/>
        <end position="269"/>
    </location>
</feature>
<feature type="strand" evidence="15">
    <location>
        <begin position="272"/>
        <end position="276"/>
    </location>
</feature>
<feature type="strand" evidence="15">
    <location>
        <begin position="279"/>
        <end position="283"/>
    </location>
</feature>
<feature type="strand" evidence="15">
    <location>
        <begin position="288"/>
        <end position="291"/>
    </location>
</feature>
<feature type="strand" evidence="15">
    <location>
        <begin position="295"/>
        <end position="302"/>
    </location>
</feature>
<feature type="helix" evidence="15">
    <location>
        <begin position="303"/>
        <end position="320"/>
    </location>
</feature>
<feature type="helix" evidence="13">
    <location>
        <begin position="538"/>
        <end position="561"/>
    </location>
</feature>
<feature type="helix" evidence="13">
    <location>
        <begin position="563"/>
        <end position="570"/>
    </location>
</feature>
<feature type="helix" evidence="13">
    <location>
        <begin position="576"/>
        <end position="583"/>
    </location>
</feature>
<feature type="turn" evidence="13">
    <location>
        <begin position="584"/>
        <end position="586"/>
    </location>
</feature>
<feature type="helix" evidence="13">
    <location>
        <begin position="587"/>
        <end position="608"/>
    </location>
</feature>
<feature type="helix" evidence="13">
    <location>
        <begin position="613"/>
        <end position="619"/>
    </location>
</feature>
<feature type="helix" evidence="13">
    <location>
        <begin position="623"/>
        <end position="633"/>
    </location>
</feature>
<feature type="helix" evidence="13">
    <location>
        <begin position="634"/>
        <end position="636"/>
    </location>
</feature>
<feature type="helix" evidence="13">
    <location>
        <begin position="637"/>
        <end position="641"/>
    </location>
</feature>
<feature type="helix" evidence="13">
    <location>
        <begin position="643"/>
        <end position="655"/>
    </location>
</feature>
<feature type="helix" evidence="13">
    <location>
        <begin position="658"/>
        <end position="668"/>
    </location>
</feature>
<feature type="helix" evidence="13">
    <location>
        <begin position="677"/>
        <end position="680"/>
    </location>
</feature>
<feature type="helix" evidence="13">
    <location>
        <begin position="683"/>
        <end position="701"/>
    </location>
</feature>
<feature type="helix" evidence="13">
    <location>
        <begin position="709"/>
        <end position="725"/>
    </location>
</feature>
<feature type="helix" evidence="13">
    <location>
        <begin position="727"/>
        <end position="743"/>
    </location>
</feature>
<feature type="strand" evidence="14">
    <location>
        <begin position="746"/>
        <end position="748"/>
    </location>
</feature>
<feature type="strand" evidence="14">
    <location>
        <begin position="759"/>
        <end position="768"/>
    </location>
</feature>
<feature type="strand" evidence="14">
    <location>
        <begin position="773"/>
        <end position="781"/>
    </location>
</feature>
<feature type="strand" evidence="14">
    <location>
        <begin position="784"/>
        <end position="788"/>
    </location>
</feature>
<feature type="strand" evidence="14">
    <location>
        <begin position="799"/>
        <end position="806"/>
    </location>
</feature>
<feature type="strand" evidence="14">
    <location>
        <begin position="810"/>
        <end position="813"/>
    </location>
</feature>
<feature type="turn" evidence="14">
    <location>
        <begin position="817"/>
        <end position="822"/>
    </location>
</feature>
<feature type="strand" evidence="14">
    <location>
        <begin position="823"/>
        <end position="827"/>
    </location>
</feature>
<feature type="strand" evidence="14">
    <location>
        <begin position="832"/>
        <end position="836"/>
    </location>
</feature>
<feature type="helix" evidence="14">
    <location>
        <begin position="840"/>
        <end position="856"/>
    </location>
</feature>
<feature type="helix" evidence="14">
    <location>
        <begin position="909"/>
        <end position="914"/>
    </location>
</feature>
<feature type="turn" evidence="14">
    <location>
        <begin position="915"/>
        <end position="917"/>
    </location>
</feature>
<feature type="strand" evidence="14">
    <location>
        <begin position="919"/>
        <end position="921"/>
    </location>
</feature>
<feature type="helix" evidence="14">
    <location>
        <begin position="922"/>
        <end position="928"/>
    </location>
</feature>
<feature type="strand" evidence="14">
    <location>
        <begin position="933"/>
        <end position="939"/>
    </location>
</feature>
<feature type="strand" evidence="14">
    <location>
        <begin position="948"/>
        <end position="955"/>
    </location>
</feature>
<feature type="strand" evidence="14">
    <location>
        <begin position="958"/>
        <end position="964"/>
    </location>
</feature>
<feature type="strand" evidence="14">
    <location>
        <begin position="971"/>
        <end position="975"/>
    </location>
</feature>
<feature type="strand" evidence="14">
    <location>
        <begin position="980"/>
        <end position="982"/>
    </location>
</feature>
<feature type="strand" evidence="14">
    <location>
        <begin position="994"/>
        <end position="1000"/>
    </location>
</feature>
<feature type="strand" evidence="14">
    <location>
        <begin position="1003"/>
        <end position="1008"/>
    </location>
</feature>
<feature type="strand" evidence="14">
    <location>
        <begin position="1010"/>
        <end position="1012"/>
    </location>
</feature>
<feature type="helix" evidence="14">
    <location>
        <begin position="1013"/>
        <end position="1023"/>
    </location>
</feature>